<protein>
    <recommendedName>
        <fullName>Flavohemoprotein-1</fullName>
    </recommendedName>
    <alternativeName>
        <fullName>Flavohemoglobin-1</fullName>
        <shortName>FlavoHb-1</shortName>
    </alternativeName>
    <alternativeName>
        <fullName>Hemoglobin-like protein-1</fullName>
    </alternativeName>
    <alternativeName>
        <fullName>Nitric oxide dioxygenase-1</fullName>
        <shortName>NO oxygenase-1</shortName>
        <shortName>NOD-1</shortName>
        <ecNumber>1.14.12.17</ecNumber>
    </alternativeName>
</protein>
<evidence type="ECO:0000250" key="1"/>
<evidence type="ECO:0000255" key="2">
    <source>
        <dbReference type="PROSITE-ProRule" id="PRU00238"/>
    </source>
</evidence>
<evidence type="ECO:0000255" key="3">
    <source>
        <dbReference type="PROSITE-ProRule" id="PRU00716"/>
    </source>
</evidence>
<evidence type="ECO:0000305" key="4"/>
<name>HMP1_GIAIA</name>
<comment type="function">
    <text evidence="1">Flavohemoprotein involved in nitric oxide (NO) detoxification in an aerobic process, termed nitric oxide dioxygenase (NOD) reaction that utilizes O(2) and NAD(P)H to convert NO to nitrate, which protects the protozoan parasite from various noxious nitrogen compounds. Therefore, plays a central role in the inducible response to nitrosative stress. May also be involved in O(2) detoxification (By similarity).</text>
</comment>
<comment type="catalytic activity">
    <reaction>
        <text>2 nitric oxide + NADPH + 2 O2 = 2 nitrate + NADP(+) + H(+)</text>
        <dbReference type="Rhea" id="RHEA:19465"/>
        <dbReference type="ChEBI" id="CHEBI:15378"/>
        <dbReference type="ChEBI" id="CHEBI:15379"/>
        <dbReference type="ChEBI" id="CHEBI:16480"/>
        <dbReference type="ChEBI" id="CHEBI:17632"/>
        <dbReference type="ChEBI" id="CHEBI:57783"/>
        <dbReference type="ChEBI" id="CHEBI:58349"/>
        <dbReference type="EC" id="1.14.12.17"/>
    </reaction>
</comment>
<comment type="catalytic activity">
    <reaction>
        <text>2 nitric oxide + NADH + 2 O2 = 2 nitrate + NAD(+) + H(+)</text>
        <dbReference type="Rhea" id="RHEA:19469"/>
        <dbReference type="ChEBI" id="CHEBI:15378"/>
        <dbReference type="ChEBI" id="CHEBI:15379"/>
        <dbReference type="ChEBI" id="CHEBI:16480"/>
        <dbReference type="ChEBI" id="CHEBI:17632"/>
        <dbReference type="ChEBI" id="CHEBI:57540"/>
        <dbReference type="ChEBI" id="CHEBI:57945"/>
        <dbReference type="EC" id="1.14.12.17"/>
    </reaction>
</comment>
<comment type="cofactor">
    <cofactor evidence="1">
        <name>heme b</name>
        <dbReference type="ChEBI" id="CHEBI:60344"/>
    </cofactor>
    <text evidence="1">Binds 1 heme b group.</text>
</comment>
<comment type="cofactor">
    <cofactor evidence="1">
        <name>FAD</name>
        <dbReference type="ChEBI" id="CHEBI:57692"/>
    </cofactor>
    <text evidence="1">Binds 1 FAD.</text>
</comment>
<comment type="subunit">
    <text evidence="1">Monomer.</text>
</comment>
<comment type="domain">
    <text>Consists of two distinct domains; an N-terminal heme-containing oxygen-binding domain and a C-terminal reductase domain with binding sites for FAD and NAD(P)H.</text>
</comment>
<comment type="similarity">
    <text evidence="2">Belongs to the globin family. Two-domain flavohemoproteins subfamily.</text>
</comment>
<comment type="similarity">
    <text evidence="4">In the C-terminal section; belongs to the flavoprotein pyridine nucleotide cytochrome reductase family.</text>
</comment>
<sequence length="457" mass="51328">MALSEDTIKAVEATAGLIAAQGIEFTRAFYERMLTKNEELKDVFNLAHQRTLRQPKALLDSLVAYALSIRRINELYELKGKDLPWTGHLAELQGFFSVAERVANKHTSVGIQPAQYQIVGAHLLATIEDRVTKDRAVLAAWGKAYEFLADLLIKREEEIYAETEGSEGGWRQTRTFRVEEKARVNEVICRFRLVPAKGGASVVQHKPGQYLAIFVRNPELFQHQQIRQYSIMSAPNSAYYEIAVHKDGAGTVSRYLHDHVDTGDLLEVAPPYGDFFLRYLEAGEQAAADTQASSEFQVLQGRAVNFAAEKTAPIVLISGGIGQTPLLSMLRFLAQKEGRETARPIFWIHAAHDSRVRAFKEEVDAIREAALPSLRVVTFLSEVRATDREGEDYDFAGRINLDRIPELARLEAGHANPHYFFVGPTGFMTAVEEQLRARSVPDDRIHFEMFGPFKASH</sequence>
<organism>
    <name type="scientific">Giardia intestinalis (strain P15)</name>
    <name type="common">Giardia lamblia</name>
    <dbReference type="NCBI Taxonomy" id="658858"/>
    <lineage>
        <taxon>Eukaryota</taxon>
        <taxon>Metamonada</taxon>
        <taxon>Diplomonadida</taxon>
        <taxon>Hexamitidae</taxon>
        <taxon>Giardiinae</taxon>
        <taxon>Giardia</taxon>
    </lineage>
</organism>
<feature type="chain" id="PRO_0000409355" description="Flavohemoprotein-1">
    <location>
        <begin position="1"/>
        <end position="457"/>
    </location>
</feature>
<feature type="domain" description="Globin" evidence="2">
    <location>
        <begin position="2"/>
        <end position="157"/>
    </location>
</feature>
<feature type="domain" description="FAD-binding FR-type" evidence="3">
    <location>
        <begin position="171"/>
        <end position="278"/>
    </location>
</feature>
<feature type="region of interest" description="Reductase" evidence="1">
    <location>
        <begin position="168"/>
        <end position="456"/>
    </location>
</feature>
<feature type="active site" description="Charge relay system" evidence="1">
    <location>
        <position position="116"/>
    </location>
</feature>
<feature type="active site" description="Charge relay system" evidence="1">
    <location>
        <position position="156"/>
    </location>
</feature>
<feature type="binding site" description="proximal binding residue" evidence="2">
    <location>
        <position position="106"/>
    </location>
    <ligand>
        <name>heme b</name>
        <dbReference type="ChEBI" id="CHEBI:60344"/>
    </ligand>
    <ligandPart>
        <name>Fe</name>
        <dbReference type="ChEBI" id="CHEBI:18248"/>
    </ligandPart>
</feature>
<feature type="binding site" evidence="1">
    <location>
        <position position="210"/>
    </location>
    <ligand>
        <name>FAD</name>
        <dbReference type="ChEBI" id="CHEBI:57692"/>
    </ligand>
</feature>
<feature type="binding site" evidence="1">
    <location>
        <begin position="227"/>
        <end position="230"/>
    </location>
    <ligand>
        <name>FAD</name>
        <dbReference type="ChEBI" id="CHEBI:57692"/>
    </ligand>
</feature>
<feature type="binding site" evidence="1">
    <location>
        <begin position="320"/>
        <end position="325"/>
    </location>
    <ligand>
        <name>NADP(+)</name>
        <dbReference type="ChEBI" id="CHEBI:58349"/>
    </ligand>
</feature>
<feature type="binding site" evidence="1">
    <location>
        <begin position="449"/>
        <end position="452"/>
    </location>
    <ligand>
        <name>FAD</name>
        <dbReference type="ChEBI" id="CHEBI:57692"/>
    </ligand>
</feature>
<feature type="site" description="Involved in heme-bound ligand stabilization and O-O bond activation" evidence="1">
    <location>
        <position position="30"/>
    </location>
</feature>
<feature type="site" description="Influences the redox potential of the prosthetic heme and FAD groups" evidence="1">
    <location>
        <position position="105"/>
    </location>
</feature>
<feature type="site" description="Influences the redox potential of the prosthetic heme and FAD groups" evidence="1">
    <location>
        <position position="448"/>
    </location>
</feature>
<reference key="1">
    <citation type="journal article" date="2010" name="BMC Genomics">
        <title>Genome analysis and comparative genomics of a Giardia intestinalis assemblage E isolate.</title>
        <authorList>
            <person name="Jerlstrom-Hultqvist J."/>
            <person name="Franzen O."/>
            <person name="Ankarklev J."/>
            <person name="Xu F."/>
            <person name="Nohynkova E."/>
            <person name="Andersson J.O."/>
            <person name="Svard S.G."/>
            <person name="Andersson B."/>
        </authorList>
    </citation>
    <scope>NUCLEOTIDE SEQUENCE [LARGE SCALE GENOMIC DNA]</scope>
    <source>
        <strain>P15</strain>
    </source>
</reference>
<keyword id="KW-0216">Detoxification</keyword>
<keyword id="KW-0274">FAD</keyword>
<keyword id="KW-0285">Flavoprotein</keyword>
<keyword id="KW-0349">Heme</keyword>
<keyword id="KW-0408">Iron</keyword>
<keyword id="KW-0479">Metal-binding</keyword>
<keyword id="KW-0520">NAD</keyword>
<keyword id="KW-0521">NADP</keyword>
<keyword id="KW-0560">Oxidoreductase</keyword>
<keyword id="KW-0561">Oxygen transport</keyword>
<keyword id="KW-0813">Transport</keyword>
<accession>E1F8Q4</accession>
<gene>
    <name type="primary">hmpA-1</name>
    <name type="synonym">FLHb-1</name>
    <name type="ORF">GLP15_2272</name>
</gene>
<dbReference type="EC" id="1.14.12.17"/>
<dbReference type="EMBL" id="ACVC01000277">
    <property type="protein sequence ID" value="EFO61171.1"/>
    <property type="molecule type" value="Genomic_DNA"/>
</dbReference>
<dbReference type="SMR" id="E1F8Q4"/>
<dbReference type="STRING" id="658858.E1F8Q4"/>
<dbReference type="EnsemblProtists" id="EFO61171">
    <property type="protein sequence ID" value="EFO61171"/>
    <property type="gene ID" value="GLP15_2272"/>
</dbReference>
<dbReference type="VEuPathDB" id="GiardiaDB:GLP15_2272"/>
<dbReference type="OMA" id="ADIHYEV"/>
<dbReference type="OrthoDB" id="436496at2759"/>
<dbReference type="Proteomes" id="UP000008974">
    <property type="component" value="Unassembled WGS sequence"/>
</dbReference>
<dbReference type="GO" id="GO:0071949">
    <property type="term" value="F:FAD binding"/>
    <property type="evidence" value="ECO:0007669"/>
    <property type="project" value="TreeGrafter"/>
</dbReference>
<dbReference type="GO" id="GO:0020037">
    <property type="term" value="F:heme binding"/>
    <property type="evidence" value="ECO:0007669"/>
    <property type="project" value="InterPro"/>
</dbReference>
<dbReference type="GO" id="GO:0046872">
    <property type="term" value="F:metal ion binding"/>
    <property type="evidence" value="ECO:0007669"/>
    <property type="project" value="UniProtKB-KW"/>
</dbReference>
<dbReference type="GO" id="GO:0008941">
    <property type="term" value="F:nitric oxide dioxygenase NAD(P)H activity"/>
    <property type="evidence" value="ECO:0007669"/>
    <property type="project" value="UniProtKB-EC"/>
</dbReference>
<dbReference type="GO" id="GO:0019825">
    <property type="term" value="F:oxygen binding"/>
    <property type="evidence" value="ECO:0007669"/>
    <property type="project" value="InterPro"/>
</dbReference>
<dbReference type="GO" id="GO:0005344">
    <property type="term" value="F:oxygen carrier activity"/>
    <property type="evidence" value="ECO:0007669"/>
    <property type="project" value="UniProtKB-KW"/>
</dbReference>
<dbReference type="GO" id="GO:0071500">
    <property type="term" value="P:cellular response to nitrosative stress"/>
    <property type="evidence" value="ECO:0007669"/>
    <property type="project" value="TreeGrafter"/>
</dbReference>
<dbReference type="GO" id="GO:0046210">
    <property type="term" value="P:nitric oxide catabolic process"/>
    <property type="evidence" value="ECO:0007669"/>
    <property type="project" value="TreeGrafter"/>
</dbReference>
<dbReference type="GO" id="GO:0009636">
    <property type="term" value="P:response to toxic substance"/>
    <property type="evidence" value="ECO:0007669"/>
    <property type="project" value="UniProtKB-KW"/>
</dbReference>
<dbReference type="CDD" id="cd06184">
    <property type="entry name" value="flavohem_like_fad_nad_binding"/>
    <property type="match status" value="1"/>
</dbReference>
<dbReference type="FunFam" id="3.40.50.80:FF:000010">
    <property type="entry name" value="Flavohemoprotein"/>
    <property type="match status" value="1"/>
</dbReference>
<dbReference type="Gene3D" id="1.10.490.10">
    <property type="entry name" value="Globins"/>
    <property type="match status" value="2"/>
</dbReference>
<dbReference type="Gene3D" id="3.40.50.80">
    <property type="entry name" value="Nucleotide-binding domain of ferredoxin-NADP reductase (FNR) module"/>
    <property type="match status" value="1"/>
</dbReference>
<dbReference type="Gene3D" id="2.40.30.10">
    <property type="entry name" value="Translation factors"/>
    <property type="match status" value="1"/>
</dbReference>
<dbReference type="InterPro" id="IPR008333">
    <property type="entry name" value="Cbr1-like_FAD-bd_dom"/>
</dbReference>
<dbReference type="InterPro" id="IPR017927">
    <property type="entry name" value="FAD-bd_FR_type"/>
</dbReference>
<dbReference type="InterPro" id="IPR039261">
    <property type="entry name" value="FNR_nucleotide-bd"/>
</dbReference>
<dbReference type="InterPro" id="IPR000971">
    <property type="entry name" value="Globin"/>
</dbReference>
<dbReference type="InterPro" id="IPR009050">
    <property type="entry name" value="Globin-like_sf"/>
</dbReference>
<dbReference type="InterPro" id="IPR012292">
    <property type="entry name" value="Globin/Proto"/>
</dbReference>
<dbReference type="InterPro" id="IPR001433">
    <property type="entry name" value="OxRdtase_FAD/NAD-bd"/>
</dbReference>
<dbReference type="InterPro" id="IPR017938">
    <property type="entry name" value="Riboflavin_synthase-like_b-brl"/>
</dbReference>
<dbReference type="PANTHER" id="PTHR43396">
    <property type="entry name" value="FLAVOHEMOPROTEIN"/>
    <property type="match status" value="1"/>
</dbReference>
<dbReference type="PANTHER" id="PTHR43396:SF3">
    <property type="entry name" value="FLAVOHEMOPROTEIN"/>
    <property type="match status" value="1"/>
</dbReference>
<dbReference type="Pfam" id="PF00970">
    <property type="entry name" value="FAD_binding_6"/>
    <property type="match status" value="1"/>
</dbReference>
<dbReference type="Pfam" id="PF00042">
    <property type="entry name" value="Globin"/>
    <property type="match status" value="1"/>
</dbReference>
<dbReference type="Pfam" id="PF00175">
    <property type="entry name" value="NAD_binding_1"/>
    <property type="match status" value="1"/>
</dbReference>
<dbReference type="SUPFAM" id="SSF52343">
    <property type="entry name" value="Ferredoxin reductase-like, C-terminal NADP-linked domain"/>
    <property type="match status" value="1"/>
</dbReference>
<dbReference type="SUPFAM" id="SSF46458">
    <property type="entry name" value="Globin-like"/>
    <property type="match status" value="1"/>
</dbReference>
<dbReference type="SUPFAM" id="SSF63380">
    <property type="entry name" value="Riboflavin synthase domain-like"/>
    <property type="match status" value="1"/>
</dbReference>
<dbReference type="PROSITE" id="PS51384">
    <property type="entry name" value="FAD_FR"/>
    <property type="match status" value="1"/>
</dbReference>
<dbReference type="PROSITE" id="PS01033">
    <property type="entry name" value="GLOBIN"/>
    <property type="match status" value="1"/>
</dbReference>
<proteinExistence type="inferred from homology"/>